<organism>
    <name type="scientific">Escherichia coli O81 (strain ED1a)</name>
    <dbReference type="NCBI Taxonomy" id="585397"/>
    <lineage>
        <taxon>Bacteria</taxon>
        <taxon>Pseudomonadati</taxon>
        <taxon>Pseudomonadota</taxon>
        <taxon>Gammaproteobacteria</taxon>
        <taxon>Enterobacterales</taxon>
        <taxon>Enterobacteriaceae</taxon>
        <taxon>Escherichia</taxon>
    </lineage>
</organism>
<reference key="1">
    <citation type="journal article" date="2009" name="PLoS Genet.">
        <title>Organised genome dynamics in the Escherichia coli species results in highly diverse adaptive paths.</title>
        <authorList>
            <person name="Touchon M."/>
            <person name="Hoede C."/>
            <person name="Tenaillon O."/>
            <person name="Barbe V."/>
            <person name="Baeriswyl S."/>
            <person name="Bidet P."/>
            <person name="Bingen E."/>
            <person name="Bonacorsi S."/>
            <person name="Bouchier C."/>
            <person name="Bouvet O."/>
            <person name="Calteau A."/>
            <person name="Chiapello H."/>
            <person name="Clermont O."/>
            <person name="Cruveiller S."/>
            <person name="Danchin A."/>
            <person name="Diard M."/>
            <person name="Dossat C."/>
            <person name="Karoui M.E."/>
            <person name="Frapy E."/>
            <person name="Garry L."/>
            <person name="Ghigo J.M."/>
            <person name="Gilles A.M."/>
            <person name="Johnson J."/>
            <person name="Le Bouguenec C."/>
            <person name="Lescat M."/>
            <person name="Mangenot S."/>
            <person name="Martinez-Jehanne V."/>
            <person name="Matic I."/>
            <person name="Nassif X."/>
            <person name="Oztas S."/>
            <person name="Petit M.A."/>
            <person name="Pichon C."/>
            <person name="Rouy Z."/>
            <person name="Ruf C.S."/>
            <person name="Schneider D."/>
            <person name="Tourret J."/>
            <person name="Vacherie B."/>
            <person name="Vallenet D."/>
            <person name="Medigue C."/>
            <person name="Rocha E.P.C."/>
            <person name="Denamur E."/>
        </authorList>
    </citation>
    <scope>NUCLEOTIDE SEQUENCE [LARGE SCALE GENOMIC DNA]</scope>
    <source>
        <strain>ED1a</strain>
    </source>
</reference>
<dbReference type="EMBL" id="CU928162">
    <property type="protein sequence ID" value="CAR07477.1"/>
    <property type="molecule type" value="Genomic_DNA"/>
</dbReference>
<dbReference type="RefSeq" id="WP_001295971.1">
    <property type="nucleotide sequence ID" value="NC_011745.1"/>
</dbReference>
<dbReference type="SMR" id="B7MTR3"/>
<dbReference type="KEGG" id="ecq:ECED1_1276"/>
<dbReference type="HOGENOM" id="CLU_098920_0_0_6"/>
<dbReference type="Proteomes" id="UP000000748">
    <property type="component" value="Chromosome"/>
</dbReference>
<dbReference type="GO" id="GO:0005737">
    <property type="term" value="C:cytoplasm"/>
    <property type="evidence" value="ECO:0007669"/>
    <property type="project" value="UniProtKB-SubCell"/>
</dbReference>
<dbReference type="GO" id="GO:0005886">
    <property type="term" value="C:plasma membrane"/>
    <property type="evidence" value="ECO:0007669"/>
    <property type="project" value="UniProtKB-SubCell"/>
</dbReference>
<dbReference type="FunFam" id="1.10.3890.10:FF:000001">
    <property type="entry name" value="High frequency lysogenization protein HflD homolog"/>
    <property type="match status" value="1"/>
</dbReference>
<dbReference type="Gene3D" id="1.10.3890.10">
    <property type="entry name" value="HflD-like"/>
    <property type="match status" value="1"/>
</dbReference>
<dbReference type="HAMAP" id="MF_00695">
    <property type="entry name" value="HflD_protein"/>
    <property type="match status" value="1"/>
</dbReference>
<dbReference type="InterPro" id="IPR007451">
    <property type="entry name" value="HflD"/>
</dbReference>
<dbReference type="InterPro" id="IPR035932">
    <property type="entry name" value="HflD-like_sf"/>
</dbReference>
<dbReference type="NCBIfam" id="NF001245">
    <property type="entry name" value="PRK00218.1-1"/>
    <property type="match status" value="1"/>
</dbReference>
<dbReference type="NCBIfam" id="NF001246">
    <property type="entry name" value="PRK00218.1-2"/>
    <property type="match status" value="1"/>
</dbReference>
<dbReference type="NCBIfam" id="NF001248">
    <property type="entry name" value="PRK00218.1-4"/>
    <property type="match status" value="1"/>
</dbReference>
<dbReference type="NCBIfam" id="NF001249">
    <property type="entry name" value="PRK00218.1-5"/>
    <property type="match status" value="1"/>
</dbReference>
<dbReference type="PANTHER" id="PTHR38100">
    <property type="entry name" value="HIGH FREQUENCY LYSOGENIZATION PROTEIN HFLD"/>
    <property type="match status" value="1"/>
</dbReference>
<dbReference type="PANTHER" id="PTHR38100:SF1">
    <property type="entry name" value="HIGH FREQUENCY LYSOGENIZATION PROTEIN HFLD"/>
    <property type="match status" value="1"/>
</dbReference>
<dbReference type="Pfam" id="PF04356">
    <property type="entry name" value="DUF489"/>
    <property type="match status" value="1"/>
</dbReference>
<dbReference type="SUPFAM" id="SSF101322">
    <property type="entry name" value="YcfC-like"/>
    <property type="match status" value="1"/>
</dbReference>
<accession>B7MTR3</accession>
<feature type="chain" id="PRO_1000200470" description="High frequency lysogenization protein HflD">
    <location>
        <begin position="1"/>
        <end position="213"/>
    </location>
</feature>
<feature type="coiled-coil region" evidence="1">
    <location>
        <begin position="79"/>
        <end position="126"/>
    </location>
</feature>
<evidence type="ECO:0000255" key="1">
    <source>
        <dbReference type="HAMAP-Rule" id="MF_00695"/>
    </source>
</evidence>
<sequence>MAKNYYDITLALAGICQSARLVQQLAHQGHCDGDALHVSLNSIIDMNPSSTLAVFGGSEANLRVGLETLLGVLNASSRQGLNAELTRYTLSLMVLERKLSSAKGALDTLGNRINGLQRQLEHFDLQSETLMSAMAAIYVDVISPLGPRIQVTGSPAVLQSPQVQAKVRATLLAGIRAAVLWHQVGGGRLQLMFSRNRLTTQAKQILAHLTPEL</sequence>
<gene>
    <name evidence="1" type="primary">hflD</name>
    <name type="ordered locus">ECED1_1276</name>
</gene>
<proteinExistence type="inferred from homology"/>
<name>HFLD_ECO81</name>
<protein>
    <recommendedName>
        <fullName evidence="1">High frequency lysogenization protein HflD</fullName>
    </recommendedName>
</protein>
<comment type="function">
    <text evidence="1">Negative regulator of phage lambda lysogenization. Contributes to the degradation of the phage regulatory protein CII. Acts probably by holding CII on the membrane surface, away from the target promoters, but close to the FtsH protease.</text>
</comment>
<comment type="subunit">
    <text evidence="1">Interacts with CII protein from phage lambda.</text>
</comment>
<comment type="subcellular location">
    <subcellularLocation>
        <location>Cytoplasm</location>
    </subcellularLocation>
    <subcellularLocation>
        <location evidence="1">Cell inner membrane</location>
        <topology evidence="1">Peripheral membrane protein</topology>
        <orientation evidence="1">Cytoplasmic side</orientation>
    </subcellularLocation>
</comment>
<comment type="similarity">
    <text evidence="1">Belongs to the HflD family.</text>
</comment>
<keyword id="KW-0997">Cell inner membrane</keyword>
<keyword id="KW-1003">Cell membrane</keyword>
<keyword id="KW-0175">Coiled coil</keyword>
<keyword id="KW-0963">Cytoplasm</keyword>
<keyword id="KW-0472">Membrane</keyword>